<evidence type="ECO:0000255" key="1">
    <source>
        <dbReference type="HAMAP-Rule" id="MF_00917"/>
    </source>
</evidence>
<evidence type="ECO:0000255" key="2">
    <source>
        <dbReference type="PROSITE-ProRule" id="PRU01266"/>
    </source>
</evidence>
<gene>
    <name evidence="1" type="primary">queE</name>
    <name type="ordered locus">BUsg_401</name>
</gene>
<accession>Q8K9D9</accession>
<name>QUEE_BUCAP</name>
<reference key="1">
    <citation type="journal article" date="2002" name="Science">
        <title>50 million years of genomic stasis in endosymbiotic bacteria.</title>
        <authorList>
            <person name="Tamas I."/>
            <person name="Klasson L."/>
            <person name="Canbaeck B."/>
            <person name="Naeslund A.K."/>
            <person name="Eriksson A.-S."/>
            <person name="Wernegreen J.J."/>
            <person name="Sandstroem J.P."/>
            <person name="Moran N.A."/>
            <person name="Andersson S.G.E."/>
        </authorList>
    </citation>
    <scope>NUCLEOTIDE SEQUENCE [LARGE SCALE GENOMIC DNA]</scope>
    <source>
        <strain>Sg</strain>
    </source>
</reference>
<keyword id="KW-0004">4Fe-4S</keyword>
<keyword id="KW-0408">Iron</keyword>
<keyword id="KW-0411">Iron-sulfur</keyword>
<keyword id="KW-0456">Lyase</keyword>
<keyword id="KW-0460">Magnesium</keyword>
<keyword id="KW-0479">Metal-binding</keyword>
<keyword id="KW-0671">Queuosine biosynthesis</keyword>
<keyword id="KW-0949">S-adenosyl-L-methionine</keyword>
<sequence>MYYPINEIFQTIQGEGYYTGTPSIFIRLQGCPVHCKWCDTKYTWKCNNEDQISYEKIIMKKKSNRKWSYMNVKEIILIIKIKKWTAKHIVITGGEPCLYNLLEITKELEKEDYKCQIETSGTELIKCSLNTWITLSPKINKKTLKTSILRSNEIKYPVLKKEDLFYLNSILKKIKNKKHNLIFLQPISQNEEALNICIKTCIIKNWRLSVQIHKYLKIR</sequence>
<protein>
    <recommendedName>
        <fullName evidence="1">7-carboxy-7-deazaguanine synthase</fullName>
        <shortName evidence="1">CDG synthase</shortName>
        <ecNumber evidence="1">4.3.99.3</ecNumber>
    </recommendedName>
    <alternativeName>
        <fullName evidence="1">Queuosine biosynthesis protein QueE</fullName>
    </alternativeName>
</protein>
<organism>
    <name type="scientific">Buchnera aphidicola subsp. Schizaphis graminum (strain Sg)</name>
    <dbReference type="NCBI Taxonomy" id="198804"/>
    <lineage>
        <taxon>Bacteria</taxon>
        <taxon>Pseudomonadati</taxon>
        <taxon>Pseudomonadota</taxon>
        <taxon>Gammaproteobacteria</taxon>
        <taxon>Enterobacterales</taxon>
        <taxon>Erwiniaceae</taxon>
        <taxon>Buchnera</taxon>
    </lineage>
</organism>
<feature type="chain" id="PRO_0000216266" description="7-carboxy-7-deazaguanine synthase">
    <location>
        <begin position="1"/>
        <end position="219"/>
    </location>
</feature>
<feature type="domain" description="Radical SAM core" evidence="2">
    <location>
        <begin position="18"/>
        <end position="219"/>
    </location>
</feature>
<feature type="binding site" evidence="1">
    <location>
        <begin position="12"/>
        <end position="14"/>
    </location>
    <ligand>
        <name>substrate</name>
    </ligand>
</feature>
<feature type="binding site" evidence="1">
    <location>
        <position position="27"/>
    </location>
    <ligand>
        <name>substrate</name>
    </ligand>
</feature>
<feature type="binding site" evidence="1">
    <location>
        <position position="31"/>
    </location>
    <ligand>
        <name>[4Fe-4S] cluster</name>
        <dbReference type="ChEBI" id="CHEBI:49883"/>
        <note>4Fe-4S-S-AdoMet</note>
    </ligand>
</feature>
<feature type="binding site" evidence="1">
    <location>
        <position position="35"/>
    </location>
    <ligand>
        <name>[4Fe-4S] cluster</name>
        <dbReference type="ChEBI" id="CHEBI:49883"/>
        <note>4Fe-4S-S-AdoMet</note>
    </ligand>
</feature>
<feature type="binding site" evidence="1">
    <location>
        <position position="38"/>
    </location>
    <ligand>
        <name>[4Fe-4S] cluster</name>
        <dbReference type="ChEBI" id="CHEBI:49883"/>
        <note>4Fe-4S-S-AdoMet</note>
    </ligand>
</feature>
<feature type="binding site" evidence="1">
    <location>
        <position position="40"/>
    </location>
    <ligand>
        <name>Mg(2+)</name>
        <dbReference type="ChEBI" id="CHEBI:18420"/>
    </ligand>
</feature>
<feature type="binding site" evidence="1">
    <location>
        <position position="92"/>
    </location>
    <ligand>
        <name>substrate</name>
    </ligand>
</feature>
<feature type="binding site" evidence="1">
    <location>
        <position position="94"/>
    </location>
    <ligand>
        <name>S-adenosyl-L-methionine</name>
        <dbReference type="ChEBI" id="CHEBI:59789"/>
    </ligand>
</feature>
<feature type="binding site" evidence="1">
    <location>
        <begin position="136"/>
        <end position="138"/>
    </location>
    <ligand>
        <name>S-adenosyl-L-methionine</name>
        <dbReference type="ChEBI" id="CHEBI:59789"/>
    </ligand>
</feature>
<dbReference type="EC" id="4.3.99.3" evidence="1"/>
<dbReference type="EMBL" id="AE013218">
    <property type="protein sequence ID" value="AAM67952.1"/>
    <property type="molecule type" value="Genomic_DNA"/>
</dbReference>
<dbReference type="RefSeq" id="WP_011053919.1">
    <property type="nucleotide sequence ID" value="NC_004061.1"/>
</dbReference>
<dbReference type="SMR" id="Q8K9D9"/>
<dbReference type="STRING" id="198804.BUsg_401"/>
<dbReference type="GeneID" id="93003875"/>
<dbReference type="KEGG" id="bas:BUsg_401"/>
<dbReference type="eggNOG" id="COG0602">
    <property type="taxonomic scope" value="Bacteria"/>
</dbReference>
<dbReference type="HOGENOM" id="CLU_066739_3_0_6"/>
<dbReference type="UniPathway" id="UPA00391"/>
<dbReference type="Proteomes" id="UP000000416">
    <property type="component" value="Chromosome"/>
</dbReference>
<dbReference type="GO" id="GO:0051539">
    <property type="term" value="F:4 iron, 4 sulfur cluster binding"/>
    <property type="evidence" value="ECO:0007669"/>
    <property type="project" value="UniProtKB-UniRule"/>
</dbReference>
<dbReference type="GO" id="GO:0016840">
    <property type="term" value="F:carbon-nitrogen lyase activity"/>
    <property type="evidence" value="ECO:0007669"/>
    <property type="project" value="UniProtKB-UniRule"/>
</dbReference>
<dbReference type="GO" id="GO:0000287">
    <property type="term" value="F:magnesium ion binding"/>
    <property type="evidence" value="ECO:0007669"/>
    <property type="project" value="UniProtKB-UniRule"/>
</dbReference>
<dbReference type="GO" id="GO:1904047">
    <property type="term" value="F:S-adenosyl-L-methionine binding"/>
    <property type="evidence" value="ECO:0007669"/>
    <property type="project" value="UniProtKB-UniRule"/>
</dbReference>
<dbReference type="GO" id="GO:0008616">
    <property type="term" value="P:queuosine biosynthetic process"/>
    <property type="evidence" value="ECO:0007669"/>
    <property type="project" value="UniProtKB-UniRule"/>
</dbReference>
<dbReference type="Gene3D" id="3.20.20.70">
    <property type="entry name" value="Aldolase class I"/>
    <property type="match status" value="1"/>
</dbReference>
<dbReference type="HAMAP" id="MF_00917">
    <property type="entry name" value="QueE"/>
    <property type="match status" value="1"/>
</dbReference>
<dbReference type="InterPro" id="IPR024924">
    <property type="entry name" value="7-CO-7-deazaguanine_synth-like"/>
</dbReference>
<dbReference type="InterPro" id="IPR013785">
    <property type="entry name" value="Aldolase_TIM"/>
</dbReference>
<dbReference type="InterPro" id="IPR007197">
    <property type="entry name" value="rSAM"/>
</dbReference>
<dbReference type="InterPro" id="IPR027609">
    <property type="entry name" value="rSAM_QueE_proteobac"/>
</dbReference>
<dbReference type="NCBIfam" id="TIGR04322">
    <property type="entry name" value="rSAM_QueE_Ecoli"/>
    <property type="match status" value="1"/>
</dbReference>
<dbReference type="PANTHER" id="PTHR42836">
    <property type="entry name" value="7-CARBOXY-7-DEAZAGUANINE SYNTHASE"/>
    <property type="match status" value="1"/>
</dbReference>
<dbReference type="PANTHER" id="PTHR42836:SF1">
    <property type="entry name" value="7-CARBOXY-7-DEAZAGUANINE SYNTHASE"/>
    <property type="match status" value="1"/>
</dbReference>
<dbReference type="Pfam" id="PF13353">
    <property type="entry name" value="Fer4_12"/>
    <property type="match status" value="1"/>
</dbReference>
<dbReference type="Pfam" id="PF04055">
    <property type="entry name" value="Radical_SAM"/>
    <property type="match status" value="1"/>
</dbReference>
<dbReference type="PIRSF" id="PIRSF000370">
    <property type="entry name" value="QueE"/>
    <property type="match status" value="1"/>
</dbReference>
<dbReference type="SFLD" id="SFLDS00029">
    <property type="entry name" value="Radical_SAM"/>
    <property type="match status" value="1"/>
</dbReference>
<dbReference type="SUPFAM" id="SSF102114">
    <property type="entry name" value="Radical SAM enzymes"/>
    <property type="match status" value="1"/>
</dbReference>
<dbReference type="PROSITE" id="PS51918">
    <property type="entry name" value="RADICAL_SAM"/>
    <property type="match status" value="1"/>
</dbReference>
<proteinExistence type="inferred from homology"/>
<comment type="function">
    <text evidence="1">Catalyzes the complex heterocyclic radical-mediated conversion of 6-carboxy-5,6,7,8-tetrahydropterin (CPH4) to 7-carboxy-7-deazaguanine (CDG), a step common to the biosynthetic pathways of all 7-deazapurine-containing compounds.</text>
</comment>
<comment type="catalytic activity">
    <reaction evidence="1">
        <text>6-carboxy-5,6,7,8-tetrahydropterin + H(+) = 7-carboxy-7-deazaguanine + NH4(+)</text>
        <dbReference type="Rhea" id="RHEA:27974"/>
        <dbReference type="ChEBI" id="CHEBI:15378"/>
        <dbReference type="ChEBI" id="CHEBI:28938"/>
        <dbReference type="ChEBI" id="CHEBI:61032"/>
        <dbReference type="ChEBI" id="CHEBI:61036"/>
        <dbReference type="EC" id="4.3.99.3"/>
    </reaction>
</comment>
<comment type="cofactor">
    <cofactor evidence="1">
        <name>[4Fe-4S] cluster</name>
        <dbReference type="ChEBI" id="CHEBI:49883"/>
    </cofactor>
    <text evidence="1">Binds 1 [4Fe-4S] cluster. The cluster is coordinated with 3 cysteines and an exchangeable S-adenosyl-L-methionine.</text>
</comment>
<comment type="cofactor">
    <cofactor evidence="1">
        <name>S-adenosyl-L-methionine</name>
        <dbReference type="ChEBI" id="CHEBI:59789"/>
    </cofactor>
    <text evidence="1">Binds 1 S-adenosyl-L-methionine per subunit.</text>
</comment>
<comment type="cofactor">
    <cofactor evidence="1">
        <name>Mg(2+)</name>
        <dbReference type="ChEBI" id="CHEBI:18420"/>
    </cofactor>
</comment>
<comment type="pathway">
    <text evidence="1">Purine metabolism; 7-cyano-7-deazaguanine biosynthesis.</text>
</comment>
<comment type="subunit">
    <text evidence="1">Homodimer.</text>
</comment>
<comment type="similarity">
    <text evidence="1">Belongs to the radical SAM superfamily. 7-carboxy-7-deazaguanine synthase family.</text>
</comment>